<feature type="chain" id="PRO_1000056714" description="Protein FdhE">
    <location>
        <begin position="1"/>
        <end position="309"/>
    </location>
</feature>
<evidence type="ECO:0000255" key="1">
    <source>
        <dbReference type="HAMAP-Rule" id="MF_00611"/>
    </source>
</evidence>
<reference key="1">
    <citation type="journal article" date="2005" name="Nucleic Acids Res.">
        <title>Genome dynamics and diversity of Shigella species, the etiologic agents of bacillary dysentery.</title>
        <authorList>
            <person name="Yang F."/>
            <person name="Yang J."/>
            <person name="Zhang X."/>
            <person name="Chen L."/>
            <person name="Jiang Y."/>
            <person name="Yan Y."/>
            <person name="Tang X."/>
            <person name="Wang J."/>
            <person name="Xiong Z."/>
            <person name="Dong J."/>
            <person name="Xue Y."/>
            <person name="Zhu Y."/>
            <person name="Xu X."/>
            <person name="Sun L."/>
            <person name="Chen S."/>
            <person name="Nie H."/>
            <person name="Peng J."/>
            <person name="Xu J."/>
            <person name="Wang Y."/>
            <person name="Yuan Z."/>
            <person name="Wen Y."/>
            <person name="Yao Z."/>
            <person name="Shen Y."/>
            <person name="Qiang B."/>
            <person name="Hou Y."/>
            <person name="Yu J."/>
            <person name="Jin Q."/>
        </authorList>
    </citation>
    <scope>NUCLEOTIDE SEQUENCE [LARGE SCALE GENOMIC DNA]</scope>
    <source>
        <strain>Sb227</strain>
    </source>
</reference>
<accession>Q31UA2</accession>
<organism>
    <name type="scientific">Shigella boydii serotype 4 (strain Sb227)</name>
    <dbReference type="NCBI Taxonomy" id="300268"/>
    <lineage>
        <taxon>Bacteria</taxon>
        <taxon>Pseudomonadati</taxon>
        <taxon>Pseudomonadota</taxon>
        <taxon>Gammaproteobacteria</taxon>
        <taxon>Enterobacterales</taxon>
        <taxon>Enterobacteriaceae</taxon>
        <taxon>Shigella</taxon>
    </lineage>
</organism>
<protein>
    <recommendedName>
        <fullName evidence="1">Protein FdhE</fullName>
    </recommendedName>
</protein>
<name>FDHE_SHIBS</name>
<comment type="function">
    <text evidence="1">Necessary for formate dehydrogenase activity.</text>
</comment>
<comment type="subcellular location">
    <subcellularLocation>
        <location evidence="1">Cytoplasm</location>
    </subcellularLocation>
</comment>
<comment type="similarity">
    <text evidence="1">Belongs to the FdhE family.</text>
</comment>
<proteinExistence type="inferred from homology"/>
<gene>
    <name evidence="1" type="primary">fdhE</name>
    <name type="ordered locus">SBO_3905</name>
</gene>
<keyword id="KW-0963">Cytoplasm</keyword>
<dbReference type="EMBL" id="CP000036">
    <property type="protein sequence ID" value="ABB68356.1"/>
    <property type="molecule type" value="Genomic_DNA"/>
</dbReference>
<dbReference type="RefSeq" id="WP_000027697.1">
    <property type="nucleotide sequence ID" value="NC_007613.1"/>
</dbReference>
<dbReference type="SMR" id="Q31UA2"/>
<dbReference type="KEGG" id="sbo:SBO_3905"/>
<dbReference type="HOGENOM" id="CLU_055275_0_0_6"/>
<dbReference type="Proteomes" id="UP000007067">
    <property type="component" value="Chromosome"/>
</dbReference>
<dbReference type="GO" id="GO:0005829">
    <property type="term" value="C:cytosol"/>
    <property type="evidence" value="ECO:0007669"/>
    <property type="project" value="TreeGrafter"/>
</dbReference>
<dbReference type="GO" id="GO:0008199">
    <property type="term" value="F:ferric iron binding"/>
    <property type="evidence" value="ECO:0007669"/>
    <property type="project" value="TreeGrafter"/>
</dbReference>
<dbReference type="GO" id="GO:0051604">
    <property type="term" value="P:protein maturation"/>
    <property type="evidence" value="ECO:0007669"/>
    <property type="project" value="TreeGrafter"/>
</dbReference>
<dbReference type="CDD" id="cd16341">
    <property type="entry name" value="FdhE"/>
    <property type="match status" value="1"/>
</dbReference>
<dbReference type="FunFam" id="3.90.1670.10:FF:000001">
    <property type="entry name" value="Protein FdhE"/>
    <property type="match status" value="1"/>
</dbReference>
<dbReference type="Gene3D" id="3.90.1670.10">
    <property type="entry name" value="FdhE-like domain"/>
    <property type="match status" value="1"/>
</dbReference>
<dbReference type="HAMAP" id="MF_00611">
    <property type="entry name" value="FdeH"/>
    <property type="match status" value="1"/>
</dbReference>
<dbReference type="InterPro" id="IPR024064">
    <property type="entry name" value="FdhE-like_sf"/>
</dbReference>
<dbReference type="InterPro" id="IPR056796">
    <property type="entry name" value="FdhE_C"/>
</dbReference>
<dbReference type="InterPro" id="IPR056797">
    <property type="entry name" value="FdhE_central"/>
</dbReference>
<dbReference type="InterPro" id="IPR056774">
    <property type="entry name" value="FdhE_N"/>
</dbReference>
<dbReference type="InterPro" id="IPR006452">
    <property type="entry name" value="Formate_DH_accessory"/>
</dbReference>
<dbReference type="NCBIfam" id="TIGR01562">
    <property type="entry name" value="FdhE"/>
    <property type="match status" value="1"/>
</dbReference>
<dbReference type="NCBIfam" id="NF002925">
    <property type="entry name" value="PRK03564.1"/>
    <property type="match status" value="1"/>
</dbReference>
<dbReference type="PANTHER" id="PTHR37689">
    <property type="entry name" value="PROTEIN FDHE"/>
    <property type="match status" value="1"/>
</dbReference>
<dbReference type="PANTHER" id="PTHR37689:SF1">
    <property type="entry name" value="PROTEIN FDHE"/>
    <property type="match status" value="1"/>
</dbReference>
<dbReference type="Pfam" id="PF24860">
    <property type="entry name" value="FdhE_C"/>
    <property type="match status" value="1"/>
</dbReference>
<dbReference type="Pfam" id="PF24859">
    <property type="entry name" value="FdhE_central"/>
    <property type="match status" value="1"/>
</dbReference>
<dbReference type="Pfam" id="PF04216">
    <property type="entry name" value="FdhE_N"/>
    <property type="match status" value="1"/>
</dbReference>
<dbReference type="PIRSF" id="PIRSF018296">
    <property type="entry name" value="Format_dh_formtn"/>
    <property type="match status" value="1"/>
</dbReference>
<dbReference type="SUPFAM" id="SSF144020">
    <property type="entry name" value="FdhE-like"/>
    <property type="match status" value="1"/>
</dbReference>
<sequence length="309" mass="34747">MSIRIIPQDELGSSEKRTADMIPPLLFPRLKNLYNRRAERLRELAENNPLDDYLRFAALIAHAQEVVLYDHPLEMDLTARIKEASAQGKPPLDIHVLPRDKHWQKLLMALIAELKPEMSGPALAVIENLEKASTQELEDMASALFASDFSSVSSDKAPFIWAALSLYWAQMANLIPGKARAEYGEQRQYCPVCGSMPVSSMVQIGTTQGLRYLHCNLCETEWHVVRVKCSNCEQSGKLHYWSLDDEQAAIKAESCDDCGTYLKILYQEKEPKVEAVADDLASLVLDARMEQEGYARSSINPFLFPGEGE</sequence>